<organism>
    <name type="scientific">Arabidopsis thaliana</name>
    <name type="common">Mouse-ear cress</name>
    <dbReference type="NCBI Taxonomy" id="3702"/>
    <lineage>
        <taxon>Eukaryota</taxon>
        <taxon>Viridiplantae</taxon>
        <taxon>Streptophyta</taxon>
        <taxon>Embryophyta</taxon>
        <taxon>Tracheophyta</taxon>
        <taxon>Spermatophyta</taxon>
        <taxon>Magnoliopsida</taxon>
        <taxon>eudicotyledons</taxon>
        <taxon>Gunneridae</taxon>
        <taxon>Pentapetalae</taxon>
        <taxon>rosids</taxon>
        <taxon>malvids</taxon>
        <taxon>Brassicales</taxon>
        <taxon>Brassicaceae</taxon>
        <taxon>Camelineae</taxon>
        <taxon>Arabidopsis</taxon>
    </lineage>
</organism>
<accession>O81004</accession>
<accession>Q5XVD7</accession>
<evidence type="ECO:0000250" key="1"/>
<evidence type="ECO:0000305" key="2"/>
<keyword id="KW-0342">GTP-binding</keyword>
<keyword id="KW-0460">Magnesium</keyword>
<keyword id="KW-0479">Metal-binding</keyword>
<keyword id="KW-0547">Nucleotide-binding</keyword>
<keyword id="KW-1185">Reference proteome</keyword>
<gene>
    <name type="primary">EMB2001</name>
    <name type="ordered locus">At2g22870</name>
    <name type="ORF">T20K9.8</name>
</gene>
<protein>
    <recommendedName>
        <fullName>GTP-binding protein At2g22870</fullName>
    </recommendedName>
    <alternativeName>
        <fullName>Protein EMBRYO DEFECTIVE 2001</fullName>
    </alternativeName>
</protein>
<name>Y2287_ARATH</name>
<dbReference type="EMBL" id="AC004786">
    <property type="protein sequence ID" value="AAC32434.2"/>
    <property type="molecule type" value="Genomic_DNA"/>
</dbReference>
<dbReference type="EMBL" id="CP002685">
    <property type="protein sequence ID" value="AEC07367.1"/>
    <property type="molecule type" value="Genomic_DNA"/>
</dbReference>
<dbReference type="EMBL" id="AY087277">
    <property type="protein sequence ID" value="AAM64830.1"/>
    <property type="molecule type" value="mRNA"/>
</dbReference>
<dbReference type="EMBL" id="AY735585">
    <property type="protein sequence ID" value="AAU44455.1"/>
    <property type="molecule type" value="mRNA"/>
</dbReference>
<dbReference type="EMBL" id="AY773849">
    <property type="protein sequence ID" value="AAV63878.1"/>
    <property type="molecule type" value="mRNA"/>
</dbReference>
<dbReference type="PIR" id="H84617">
    <property type="entry name" value="H84617"/>
</dbReference>
<dbReference type="RefSeq" id="NP_565543.1">
    <property type="nucleotide sequence ID" value="NM_127852.4"/>
</dbReference>
<dbReference type="SMR" id="O81004"/>
<dbReference type="FunCoup" id="O81004">
    <property type="interactions" value="1842"/>
</dbReference>
<dbReference type="STRING" id="3702.O81004"/>
<dbReference type="PaxDb" id="3702-AT2G22870.1"/>
<dbReference type="ProteomicsDB" id="242479"/>
<dbReference type="EnsemblPlants" id="AT2G22870.1">
    <property type="protein sequence ID" value="AT2G22870.1"/>
    <property type="gene ID" value="AT2G22870"/>
</dbReference>
<dbReference type="GeneID" id="816818"/>
<dbReference type="Gramene" id="AT2G22870.1">
    <property type="protein sequence ID" value="AT2G22870.1"/>
    <property type="gene ID" value="AT2G22870"/>
</dbReference>
<dbReference type="KEGG" id="ath:AT2G22870"/>
<dbReference type="Araport" id="AT2G22870"/>
<dbReference type="TAIR" id="AT2G22870">
    <property type="gene designation" value="EMB2001"/>
</dbReference>
<dbReference type="eggNOG" id="KOG2486">
    <property type="taxonomic scope" value="Eukaryota"/>
</dbReference>
<dbReference type="HOGENOM" id="CLU_033732_0_0_1"/>
<dbReference type="InParanoid" id="O81004"/>
<dbReference type="OMA" id="QRIDLDC"/>
<dbReference type="PhylomeDB" id="O81004"/>
<dbReference type="PRO" id="PR:O81004"/>
<dbReference type="Proteomes" id="UP000006548">
    <property type="component" value="Chromosome 2"/>
</dbReference>
<dbReference type="ExpressionAtlas" id="O81004">
    <property type="expression patterns" value="baseline and differential"/>
</dbReference>
<dbReference type="GO" id="GO:0005525">
    <property type="term" value="F:GTP binding"/>
    <property type="evidence" value="ECO:0007669"/>
    <property type="project" value="UniProtKB-KW"/>
</dbReference>
<dbReference type="GO" id="GO:0046872">
    <property type="term" value="F:metal ion binding"/>
    <property type="evidence" value="ECO:0007669"/>
    <property type="project" value="UniProtKB-KW"/>
</dbReference>
<dbReference type="CDD" id="cd01876">
    <property type="entry name" value="YihA_EngB"/>
    <property type="match status" value="1"/>
</dbReference>
<dbReference type="Gene3D" id="3.40.50.300">
    <property type="entry name" value="P-loop containing nucleotide triphosphate hydrolases"/>
    <property type="match status" value="1"/>
</dbReference>
<dbReference type="HAMAP" id="MF_00321">
    <property type="entry name" value="GTPase_EngB"/>
    <property type="match status" value="1"/>
</dbReference>
<dbReference type="InterPro" id="IPR030393">
    <property type="entry name" value="G_ENGB_dom"/>
</dbReference>
<dbReference type="InterPro" id="IPR006073">
    <property type="entry name" value="GTP-bd"/>
</dbReference>
<dbReference type="InterPro" id="IPR019987">
    <property type="entry name" value="GTP-bd_ribosome_bio_YsxC"/>
</dbReference>
<dbReference type="InterPro" id="IPR027417">
    <property type="entry name" value="P-loop_NTPase"/>
</dbReference>
<dbReference type="NCBIfam" id="TIGR03598">
    <property type="entry name" value="GTPase_YsxC"/>
    <property type="match status" value="1"/>
</dbReference>
<dbReference type="PANTHER" id="PTHR11649">
    <property type="entry name" value="MSS1/TRME-RELATED GTP-BINDING PROTEIN"/>
    <property type="match status" value="1"/>
</dbReference>
<dbReference type="PANTHER" id="PTHR11649:SF75">
    <property type="entry name" value="PROTEIN, PUTATIVE, EXPRESSED-RELATED"/>
    <property type="match status" value="1"/>
</dbReference>
<dbReference type="Pfam" id="PF01926">
    <property type="entry name" value="MMR_HSR1"/>
    <property type="match status" value="1"/>
</dbReference>
<dbReference type="SUPFAM" id="SSF52540">
    <property type="entry name" value="P-loop containing nucleoside triphosphate hydrolases"/>
    <property type="match status" value="1"/>
</dbReference>
<dbReference type="PROSITE" id="PS51706">
    <property type="entry name" value="G_ENGB"/>
    <property type="match status" value="1"/>
</dbReference>
<reference key="1">
    <citation type="journal article" date="1999" name="Nature">
        <title>Sequence and analysis of chromosome 2 of the plant Arabidopsis thaliana.</title>
        <authorList>
            <person name="Lin X."/>
            <person name="Kaul S."/>
            <person name="Rounsley S.D."/>
            <person name="Shea T.P."/>
            <person name="Benito M.-I."/>
            <person name="Town C.D."/>
            <person name="Fujii C.Y."/>
            <person name="Mason T.M."/>
            <person name="Bowman C.L."/>
            <person name="Barnstead M.E."/>
            <person name="Feldblyum T.V."/>
            <person name="Buell C.R."/>
            <person name="Ketchum K.A."/>
            <person name="Lee J.J."/>
            <person name="Ronning C.M."/>
            <person name="Koo H.L."/>
            <person name="Moffat K.S."/>
            <person name="Cronin L.A."/>
            <person name="Shen M."/>
            <person name="Pai G."/>
            <person name="Van Aken S."/>
            <person name="Umayam L."/>
            <person name="Tallon L.J."/>
            <person name="Gill J.E."/>
            <person name="Adams M.D."/>
            <person name="Carrera A.J."/>
            <person name="Creasy T.H."/>
            <person name="Goodman H.M."/>
            <person name="Somerville C.R."/>
            <person name="Copenhaver G.P."/>
            <person name="Preuss D."/>
            <person name="Nierman W.C."/>
            <person name="White O."/>
            <person name="Eisen J.A."/>
            <person name="Salzberg S.L."/>
            <person name="Fraser C.M."/>
            <person name="Venter J.C."/>
        </authorList>
    </citation>
    <scope>NUCLEOTIDE SEQUENCE [LARGE SCALE GENOMIC DNA]</scope>
    <source>
        <strain>cv. Columbia</strain>
    </source>
</reference>
<reference key="2">
    <citation type="journal article" date="2017" name="Plant J.">
        <title>Araport11: a complete reannotation of the Arabidopsis thaliana reference genome.</title>
        <authorList>
            <person name="Cheng C.Y."/>
            <person name="Krishnakumar V."/>
            <person name="Chan A.P."/>
            <person name="Thibaud-Nissen F."/>
            <person name="Schobel S."/>
            <person name="Town C.D."/>
        </authorList>
    </citation>
    <scope>GENOME REANNOTATION</scope>
    <source>
        <strain>cv. Columbia</strain>
    </source>
</reference>
<reference key="3">
    <citation type="submission" date="2002-03" db="EMBL/GenBank/DDBJ databases">
        <title>Full-length cDNA from Arabidopsis thaliana.</title>
        <authorList>
            <person name="Brover V.V."/>
            <person name="Troukhan M.E."/>
            <person name="Alexandrov N.A."/>
            <person name="Lu Y.-P."/>
            <person name="Flavell R.B."/>
            <person name="Feldmann K.A."/>
        </authorList>
    </citation>
    <scope>NUCLEOTIDE SEQUENCE [LARGE SCALE MRNA]</scope>
</reference>
<reference key="4">
    <citation type="submission" date="2004-04" db="EMBL/GenBank/DDBJ databases">
        <title>Reconstruction of cDNA sequences for hypothetical genes in Arabidopsis thaliana from 5' and 3' RACE products.</title>
        <authorList>
            <person name="Xiao Y.-L."/>
            <person name="Underwood B.A."/>
            <person name="Moskal W.A. Jr."/>
            <person name="Torian U."/>
            <person name="Redman J.C."/>
            <person name="Wu H.C."/>
            <person name="Utterback T."/>
            <person name="Town C.D."/>
        </authorList>
    </citation>
    <scope>NUCLEOTIDE SEQUENCE [LARGE SCALE MRNA]</scope>
    <source>
        <strain>cv. Columbia</strain>
    </source>
</reference>
<reference key="5">
    <citation type="submission" date="2004-10" db="EMBL/GenBank/DDBJ databases">
        <authorList>
            <person name="Underwood B.A."/>
            <person name="Xiao Y.-L."/>
            <person name="Moskal W.A. Jr."/>
            <person name="Monaghan E.L."/>
            <person name="Wang W."/>
            <person name="Redman J.C."/>
            <person name="Wu H.C."/>
            <person name="Utterback T."/>
            <person name="Town C.D."/>
        </authorList>
    </citation>
    <scope>NUCLEOTIDE SEQUENCE [LARGE SCALE MRNA]</scope>
    <source>
        <strain>cv. Columbia</strain>
    </source>
</reference>
<sequence length="300" mass="33692">MVLLLRYRSLTINLTPLIPKSQKFHTLQSFRNPNFISIPKISASTNNPTTTTNRSISDATKFAKSVLFIPPGVEIEELTDDMVLPGSNIVIGPFAGHSQIKEVEFVKSSARARDCPKDDRPEIAILGRSNVGKSSLINCLVRKKEVALTSKKPGKTQLINHFLVNKSWYIVDLPGYGFAKVSDAAKTDWSAFTKGYFLNRDSLVCVLLLIDASVPPQKIDLDCANWLGRNNVPMTFVFTKCDKMKATKGKRPDENIKAFQQIIRENFKVHPPWILTSSVSGLGRDELLLHMSQLRNYWDQ</sequence>
<proteinExistence type="evidence at transcript level"/>
<feature type="chain" id="PRO_0000157815" description="GTP-binding protein At2g22870">
    <location>
        <begin position="1"/>
        <end position="300"/>
    </location>
</feature>
<feature type="domain" description="EngB-type G">
    <location>
        <begin position="119"/>
        <end position="297"/>
    </location>
</feature>
<feature type="binding site" evidence="1">
    <location>
        <begin position="127"/>
        <end position="134"/>
    </location>
    <ligand>
        <name>GTP</name>
        <dbReference type="ChEBI" id="CHEBI:37565"/>
    </ligand>
</feature>
<feature type="binding site" evidence="1">
    <location>
        <position position="134"/>
    </location>
    <ligand>
        <name>Mg(2+)</name>
        <dbReference type="ChEBI" id="CHEBI:18420"/>
    </ligand>
</feature>
<feature type="binding site" evidence="1">
    <location>
        <begin position="154"/>
        <end position="158"/>
    </location>
    <ligand>
        <name>GTP</name>
        <dbReference type="ChEBI" id="CHEBI:37565"/>
    </ligand>
</feature>
<feature type="binding site" evidence="1">
    <location>
        <position position="156"/>
    </location>
    <ligand>
        <name>Mg(2+)</name>
        <dbReference type="ChEBI" id="CHEBI:18420"/>
    </ligand>
</feature>
<feature type="binding site" evidence="1">
    <location>
        <begin position="172"/>
        <end position="175"/>
    </location>
    <ligand>
        <name>GTP</name>
        <dbReference type="ChEBI" id="CHEBI:37565"/>
    </ligand>
</feature>
<feature type="binding site" evidence="1">
    <location>
        <begin position="239"/>
        <end position="242"/>
    </location>
    <ligand>
        <name>GTP</name>
        <dbReference type="ChEBI" id="CHEBI:37565"/>
    </ligand>
</feature>
<feature type="binding site" evidence="1">
    <location>
        <begin position="276"/>
        <end position="278"/>
    </location>
    <ligand>
        <name>GTP</name>
        <dbReference type="ChEBI" id="CHEBI:37565"/>
    </ligand>
</feature>
<comment type="cofactor">
    <cofactor evidence="1">
        <name>Mg(2+)</name>
        <dbReference type="ChEBI" id="CHEBI:18420"/>
    </cofactor>
</comment>
<comment type="similarity">
    <text evidence="2">Belongs to the TRAFAC class TrmE-Era-EngA-EngB-Septin-like GTPase superfamily. EngB GTPase family.</text>
</comment>